<proteinExistence type="inferred from homology"/>
<accession>A4X642</accession>
<organism>
    <name type="scientific">Salinispora tropica (strain ATCC BAA-916 / DSM 44818 / JCM 13857 / NBRC 105044 / CNB-440)</name>
    <dbReference type="NCBI Taxonomy" id="369723"/>
    <lineage>
        <taxon>Bacteria</taxon>
        <taxon>Bacillati</taxon>
        <taxon>Actinomycetota</taxon>
        <taxon>Actinomycetes</taxon>
        <taxon>Micromonosporales</taxon>
        <taxon>Micromonosporaceae</taxon>
        <taxon>Salinispora</taxon>
    </lineage>
</organism>
<feature type="chain" id="PRO_1000075264" description="ATP phosphoribosyltransferase">
    <location>
        <begin position="1"/>
        <end position="281"/>
    </location>
</feature>
<keyword id="KW-0028">Amino-acid biosynthesis</keyword>
<keyword id="KW-0067">ATP-binding</keyword>
<keyword id="KW-0963">Cytoplasm</keyword>
<keyword id="KW-0328">Glycosyltransferase</keyword>
<keyword id="KW-0368">Histidine biosynthesis</keyword>
<keyword id="KW-0460">Magnesium</keyword>
<keyword id="KW-0479">Metal-binding</keyword>
<keyword id="KW-0547">Nucleotide-binding</keyword>
<keyword id="KW-1185">Reference proteome</keyword>
<keyword id="KW-0808">Transferase</keyword>
<name>HIS1_SALTO</name>
<dbReference type="EC" id="2.4.2.17" evidence="1"/>
<dbReference type="EMBL" id="CP000667">
    <property type="protein sequence ID" value="ABP54342.1"/>
    <property type="molecule type" value="Genomic_DNA"/>
</dbReference>
<dbReference type="RefSeq" id="WP_011905772.1">
    <property type="nucleotide sequence ID" value="NC_009380.1"/>
</dbReference>
<dbReference type="SMR" id="A4X642"/>
<dbReference type="STRING" id="369723.Strop_1880"/>
<dbReference type="KEGG" id="stp:Strop_1880"/>
<dbReference type="PATRIC" id="fig|369723.5.peg.1928"/>
<dbReference type="eggNOG" id="COG0040">
    <property type="taxonomic scope" value="Bacteria"/>
</dbReference>
<dbReference type="HOGENOM" id="CLU_038115_1_1_11"/>
<dbReference type="UniPathway" id="UPA00031">
    <property type="reaction ID" value="UER00006"/>
</dbReference>
<dbReference type="Proteomes" id="UP000000235">
    <property type="component" value="Chromosome"/>
</dbReference>
<dbReference type="GO" id="GO:0005737">
    <property type="term" value="C:cytoplasm"/>
    <property type="evidence" value="ECO:0007669"/>
    <property type="project" value="UniProtKB-SubCell"/>
</dbReference>
<dbReference type="GO" id="GO:0005524">
    <property type="term" value="F:ATP binding"/>
    <property type="evidence" value="ECO:0007669"/>
    <property type="project" value="UniProtKB-KW"/>
</dbReference>
<dbReference type="GO" id="GO:0003879">
    <property type="term" value="F:ATP phosphoribosyltransferase activity"/>
    <property type="evidence" value="ECO:0007669"/>
    <property type="project" value="UniProtKB-UniRule"/>
</dbReference>
<dbReference type="GO" id="GO:0000287">
    <property type="term" value="F:magnesium ion binding"/>
    <property type="evidence" value="ECO:0007669"/>
    <property type="project" value="UniProtKB-UniRule"/>
</dbReference>
<dbReference type="GO" id="GO:0000105">
    <property type="term" value="P:L-histidine biosynthetic process"/>
    <property type="evidence" value="ECO:0007669"/>
    <property type="project" value="UniProtKB-UniRule"/>
</dbReference>
<dbReference type="CDD" id="cd13591">
    <property type="entry name" value="PBP2_HisGL1"/>
    <property type="match status" value="1"/>
</dbReference>
<dbReference type="FunFam" id="3.30.70.120:FF:000003">
    <property type="entry name" value="ATP phosphoribosyltransferase"/>
    <property type="match status" value="1"/>
</dbReference>
<dbReference type="Gene3D" id="3.30.70.120">
    <property type="match status" value="1"/>
</dbReference>
<dbReference type="Gene3D" id="3.40.190.10">
    <property type="entry name" value="Periplasmic binding protein-like II"/>
    <property type="match status" value="2"/>
</dbReference>
<dbReference type="HAMAP" id="MF_00079">
    <property type="entry name" value="HisG_Long"/>
    <property type="match status" value="1"/>
</dbReference>
<dbReference type="InterPro" id="IPR020621">
    <property type="entry name" value="ATP-PRT_HisG_long"/>
</dbReference>
<dbReference type="InterPro" id="IPR013820">
    <property type="entry name" value="ATP_PRibTrfase_cat"/>
</dbReference>
<dbReference type="InterPro" id="IPR018198">
    <property type="entry name" value="ATP_PRibTrfase_CS"/>
</dbReference>
<dbReference type="InterPro" id="IPR001348">
    <property type="entry name" value="ATP_PRibTrfase_HisG"/>
</dbReference>
<dbReference type="InterPro" id="IPR013115">
    <property type="entry name" value="HisG_C"/>
</dbReference>
<dbReference type="InterPro" id="IPR011322">
    <property type="entry name" value="N-reg_PII-like_a/b"/>
</dbReference>
<dbReference type="InterPro" id="IPR015867">
    <property type="entry name" value="N-reg_PII/ATP_PRibTrfase_C"/>
</dbReference>
<dbReference type="NCBIfam" id="TIGR00070">
    <property type="entry name" value="hisG"/>
    <property type="match status" value="1"/>
</dbReference>
<dbReference type="NCBIfam" id="TIGR03455">
    <property type="entry name" value="HisG_C-term"/>
    <property type="match status" value="1"/>
</dbReference>
<dbReference type="PANTHER" id="PTHR21403:SF8">
    <property type="entry name" value="ATP PHOSPHORIBOSYLTRANSFERASE"/>
    <property type="match status" value="1"/>
</dbReference>
<dbReference type="PANTHER" id="PTHR21403">
    <property type="entry name" value="ATP PHOSPHORIBOSYLTRANSFERASE ATP-PRTASE"/>
    <property type="match status" value="1"/>
</dbReference>
<dbReference type="Pfam" id="PF01634">
    <property type="entry name" value="HisG"/>
    <property type="match status" value="1"/>
</dbReference>
<dbReference type="Pfam" id="PF08029">
    <property type="entry name" value="HisG_C"/>
    <property type="match status" value="1"/>
</dbReference>
<dbReference type="SUPFAM" id="SSF54913">
    <property type="entry name" value="GlnB-like"/>
    <property type="match status" value="1"/>
</dbReference>
<dbReference type="SUPFAM" id="SSF53850">
    <property type="entry name" value="Periplasmic binding protein-like II"/>
    <property type="match status" value="1"/>
</dbReference>
<dbReference type="PROSITE" id="PS01316">
    <property type="entry name" value="ATP_P_PHORIBOSYLTR"/>
    <property type="match status" value="1"/>
</dbReference>
<evidence type="ECO:0000255" key="1">
    <source>
        <dbReference type="HAMAP-Rule" id="MF_00079"/>
    </source>
</evidence>
<protein>
    <recommendedName>
        <fullName evidence="1">ATP phosphoribosyltransferase</fullName>
        <shortName evidence="1">ATP-PRT</shortName>
        <shortName evidence="1">ATP-PRTase</shortName>
        <ecNumber evidence="1">2.4.2.17</ecNumber>
    </recommendedName>
</protein>
<comment type="function">
    <text evidence="1">Catalyzes the condensation of ATP and 5-phosphoribose 1-diphosphate to form N'-(5'-phosphoribosyl)-ATP (PR-ATP). Has a crucial role in the pathway because the rate of histidine biosynthesis seems to be controlled primarily by regulation of HisG enzymatic activity.</text>
</comment>
<comment type="catalytic activity">
    <reaction evidence="1">
        <text>1-(5-phospho-beta-D-ribosyl)-ATP + diphosphate = 5-phospho-alpha-D-ribose 1-diphosphate + ATP</text>
        <dbReference type="Rhea" id="RHEA:18473"/>
        <dbReference type="ChEBI" id="CHEBI:30616"/>
        <dbReference type="ChEBI" id="CHEBI:33019"/>
        <dbReference type="ChEBI" id="CHEBI:58017"/>
        <dbReference type="ChEBI" id="CHEBI:73183"/>
        <dbReference type="EC" id="2.4.2.17"/>
    </reaction>
</comment>
<comment type="cofactor">
    <cofactor evidence="1">
        <name>Mg(2+)</name>
        <dbReference type="ChEBI" id="CHEBI:18420"/>
    </cofactor>
</comment>
<comment type="activity regulation">
    <text evidence="1">Feedback inhibited by histidine.</text>
</comment>
<comment type="pathway">
    <text evidence="1">Amino-acid biosynthesis; L-histidine biosynthesis; L-histidine from 5-phospho-alpha-D-ribose 1-diphosphate: step 1/9.</text>
</comment>
<comment type="subcellular location">
    <subcellularLocation>
        <location evidence="1">Cytoplasm</location>
    </subcellularLocation>
</comment>
<comment type="similarity">
    <text evidence="1">Belongs to the ATP phosphoribosyltransferase family. Long subfamily.</text>
</comment>
<gene>
    <name evidence="1" type="primary">hisG</name>
    <name type="ordered locus">Strop_1880</name>
</gene>
<reference key="1">
    <citation type="journal article" date="2007" name="Proc. Natl. Acad. Sci. U.S.A.">
        <title>Genome sequencing reveals complex secondary metabolome in the marine actinomycete Salinispora tropica.</title>
        <authorList>
            <person name="Udwary D.W."/>
            <person name="Zeigler L."/>
            <person name="Asolkar R.N."/>
            <person name="Singan V."/>
            <person name="Lapidus A."/>
            <person name="Fenical W."/>
            <person name="Jensen P.R."/>
            <person name="Moore B.S."/>
        </authorList>
    </citation>
    <scope>NUCLEOTIDE SEQUENCE [LARGE SCALE GENOMIC DNA]</scope>
    <source>
        <strain>ATCC BAA-916 / DSM 44818 / JCM 13857 / NBRC 105044 / CNB-440</strain>
    </source>
</reference>
<sequence length="281" mass="30603">MLRVAVPNKGTLAEKAAQMLREAGYRQRTDPKDLVCRDDANNIEFFYLRPKDIATYVGSGDLDVGITGRDLLVDSGAPATEVVDLGFGQATFRFAARPEDIDTAQDLDGRRVATAYPGLVERHLAELGVKADVIRLDGAVENAIRLGLADVVADVVETGATLRQAGLVVFGEPLLRSSAVLVCRSAAQPHPQGELLLRRLHSVLVARRYVMLTYDVPADLLARASSLTPGIESPTVSRLHREGWVAVQAMVLRDDVHRIMDELYQVGARAILVTNIQACRL</sequence>